<feature type="chain" id="PRO_0000436482" description="Non-reducing polyketide synthase ausA">
    <location>
        <begin position="1"/>
        <end position="2476"/>
    </location>
</feature>
<feature type="domain" description="Ketosynthase family 3 (KS3)" evidence="4">
    <location>
        <begin position="379"/>
        <end position="795"/>
    </location>
</feature>
<feature type="domain" description="PKS/mFAS DH" evidence="5">
    <location>
        <begin position="1277"/>
        <end position="1584"/>
    </location>
</feature>
<feature type="domain" description="Carrier" evidence="3">
    <location>
        <begin position="1626"/>
        <end position="1700"/>
    </location>
</feature>
<feature type="region of interest" description="N-terminal acylcarrier protein transacylase domain (SAT)" evidence="2">
    <location>
        <begin position="14"/>
        <end position="253"/>
    </location>
</feature>
<feature type="region of interest" description="Malonyl-CoA:ACP transacylase (MAT) domain" evidence="2">
    <location>
        <begin position="906"/>
        <end position="1210"/>
    </location>
</feature>
<feature type="region of interest" description="N-terminal hotdog fold" evidence="5">
    <location>
        <begin position="1277"/>
        <end position="1405"/>
    </location>
</feature>
<feature type="region of interest" description="Product template (PT) domain" evidence="2">
    <location>
        <begin position="1280"/>
        <end position="1583"/>
    </location>
</feature>
<feature type="region of interest" description="C-terminal hotdog fold" evidence="5">
    <location>
        <begin position="1433"/>
        <end position="1584"/>
    </location>
</feature>
<feature type="region of interest" description="Methyltransferase (CMeT) domain" evidence="2">
    <location>
        <begin position="1862"/>
        <end position="2095"/>
    </location>
</feature>
<feature type="region of interest" description="Thioesterase (TE) domain" evidence="10">
    <location>
        <begin position="2128"/>
        <end position="2476"/>
    </location>
</feature>
<feature type="active site" description="For beta-ketoacyl synthase activity" evidence="4">
    <location>
        <position position="544"/>
    </location>
</feature>
<feature type="active site" description="For beta-ketoacyl synthase activity" evidence="4">
    <location>
        <position position="679"/>
    </location>
</feature>
<feature type="active site" description="For beta-ketoacyl synthase activity" evidence="4">
    <location>
        <position position="718"/>
    </location>
</feature>
<feature type="active site" description="For acyl/malonyl transferase activity" evidence="6">
    <location>
        <position position="993"/>
    </location>
</feature>
<feature type="active site" description="Proton acceptor; for dehydratase activity" evidence="5">
    <location>
        <position position="1310"/>
    </location>
</feature>
<feature type="active site" description="Proton donor; for dehydratase activity" evidence="5">
    <location>
        <position position="1491"/>
    </location>
</feature>
<feature type="active site" description="For thioesterase activity" evidence="10">
    <location>
        <position position="2251"/>
    </location>
</feature>
<feature type="active site" description="For thioesterase activity" evidence="10">
    <location>
        <position position="2413"/>
    </location>
</feature>
<feature type="active site" description="For thioesterase activity" evidence="10">
    <location>
        <position position="2445"/>
    </location>
</feature>
<feature type="modified residue" description="O-(pantetheine 4'-phosphoryl)serine" evidence="3">
    <location>
        <position position="1660"/>
    </location>
</feature>
<feature type="mutagenesis site" description="Impairs the production of austinol and dehydroaustinol." evidence="7">
    <original>S</original>
    <variation>A</variation>
    <location>
        <position position="1660"/>
    </location>
</feature>
<feature type="mutagenesis site" description="Abolishes the function of the TE domain." evidence="10">
    <original>S</original>
    <variation>A</variation>
    <location>
        <position position="2251"/>
    </location>
</feature>
<feature type="mutagenesis site" description="Abolishes the function of the TE domain." evidence="10">
    <original>D</original>
    <variation>N</variation>
    <location>
        <position position="2413"/>
    </location>
</feature>
<feature type="mutagenesis site" description="Abolishes the function of the TE domain." evidence="10">
    <original>H</original>
    <variation>F</variation>
    <location>
        <position position="2445"/>
    </location>
</feature>
<keyword id="KW-0489">Methyltransferase</keyword>
<keyword id="KW-0511">Multifunctional enzyme</keyword>
<keyword id="KW-0596">Phosphopantetheine</keyword>
<keyword id="KW-0597">Phosphoprotein</keyword>
<keyword id="KW-1185">Reference proteome</keyword>
<keyword id="KW-0808">Transferase</keyword>
<comment type="function">
    <text evidence="8 9 11 12">Non-reducing polyketide synthase; part of the gene cluster A that mediates the biosynthesis of austinol and dehydroaustinol, two fungal meroterpenoids (PubMed:22329759). The first step of the pathway is the synthesis of 3,5-dimethylorsellinic acid by the polyketide synthase ausA (PubMed:22329759). 3,5-dimethylorsellinic acid is then prenylated by the polyprenyl transferase ausN (PubMed:22329759). Further epoxidation by the FAD-dependent monooxygenase ausM and cyclization by the probable terpene cyclase ausL lead to the formation of protoaustinoid A (PubMed:22329759). Protoaustinoid A is then oxidized to spiro-lactone preaustinoid A3 by the combined action of the FAD-binding monooxygenases ausB and ausC, and the dioxygenase ausE (PubMed:22329759, PubMed:23865690). Acid-catalyzed keto-rearrangement and ring contraction of the tetraketide portion of preaustinoid A3 by ausJ lead to the formation of preaustinoid A4 (PubMed:22329759). The aldo-keto reductase ausK, with the help of ausH, is involved in the next step by transforming preaustinoid A4 into isoaustinone which is in turn hydroxylated by the P450 monooxygenase ausI to form austinolide (PubMed:22329759). Finally, the cytochrome P450 monooxygenase ausG modifies austinolide to austinol (PubMed:22329759). Austinol can be further modified to dehydroaustinol which forms a diffusible complex with diorcinol that initiates conidiation (PubMed:22234162, PubMed:22329759). Due to genetic rearrangements of the clusters and the subsequent loss of some enzymes, the end products of the Emericella nidulans austinoid biosynthesis clusters are austinol and dehydroaustinol, even if additional enzymes, such as the O-acetyltransferase ausQ and the cytochrome P450 monooxygenase ausR are still functional (PubMed:29076725).</text>
</comment>
<comment type="catalytic activity">
    <reaction evidence="15 16">
        <text>3 malonyl-CoA + acetyl-CoA + 2 S-adenosyl-L-methionine = 3,5-dimethylorsellinate + 2 S-adenosyl-L-homocysteine + 3 CO2 + 4 CoA</text>
        <dbReference type="Rhea" id="RHEA:49628"/>
        <dbReference type="ChEBI" id="CHEBI:16526"/>
        <dbReference type="ChEBI" id="CHEBI:57287"/>
        <dbReference type="ChEBI" id="CHEBI:57288"/>
        <dbReference type="ChEBI" id="CHEBI:57384"/>
        <dbReference type="ChEBI" id="CHEBI:57856"/>
        <dbReference type="ChEBI" id="CHEBI:59789"/>
        <dbReference type="ChEBI" id="CHEBI:131856"/>
    </reaction>
    <physiologicalReaction direction="left-to-right" evidence="15 16">
        <dbReference type="Rhea" id="RHEA:49629"/>
    </physiologicalReaction>
</comment>
<comment type="pathway">
    <text evidence="7 9">Secondary metabolite biosynthesis; terpenoid biosynthesis.</text>
</comment>
<comment type="domain">
    <text evidence="1 16">Multidomain protein; including a starter unit:ACP transacylase (SAT) that selects the starter unit; a ketosynthase (KS) that catalyzes repeated decarboxylative condensation to elongate the polyketide backbone; a malonyl-CoA:ACP transacylase (MAT) that selects and transfers the extender unit malonyl-CoA; a product template (PT) domain that controls the immediate cyclization regioselectivity of the reactive polyketide backbone; and an acyl-carrier protein (ACP) that serves as the tether of the growing and completed polyketide via its phosphopantetheinyl arm (PubMed:22329759).</text>
</comment>
<comment type="domain">
    <text evidence="10">The release of the polyketide chain from the non-reducing polyketide synthase is mediated by the thioesterase (TE) domain localized at the C-terminus of the protein (PubMed:23368695).</text>
</comment>
<comment type="disruption phenotype">
    <text evidence="7 9">Impairs the synthesis of austinol and dehydroaustinol (PubMed:21658102, PubMed:22329759).</text>
</comment>
<comment type="miscellaneous">
    <text evidence="17">In A.calidoustus, the austinoid gene cluster lies on a contiguous DNA region, while clusters from E.nidulans and P.brasilianum are split in their respective genomes (Probable). Genetic rearrangements provoked variability among the clusters and E.nidulans produces the least number of austionoid derivatives with the end products austinol and dehydroaustinol, while P.brasilianum can produce until acetoxydehydroaustin, and A.calidoustus produces the highest number of identified derivatives (Probable).</text>
</comment>
<gene>
    <name evidence="13" type="primary">ausA</name>
    <name type="ORF">AN8383</name>
</gene>
<protein>
    <recommendedName>
        <fullName evidence="13">Non-reducing polyketide synthase ausA</fullName>
        <ecNumber evidence="15 16">2.3.1.-</ecNumber>
    </recommendedName>
    <alternativeName>
        <fullName evidence="14">Austinoid biosynthesis clusters protein A</fullName>
    </alternativeName>
    <alternativeName>
        <fullName evidence="14">Methylorcinaldehyde synthase ausA</fullName>
    </alternativeName>
</protein>
<organism>
    <name type="scientific">Emericella nidulans (strain FGSC A4 / ATCC 38163 / CBS 112.46 / NRRL 194 / M139)</name>
    <name type="common">Aspergillus nidulans</name>
    <dbReference type="NCBI Taxonomy" id="227321"/>
    <lineage>
        <taxon>Eukaryota</taxon>
        <taxon>Fungi</taxon>
        <taxon>Dikarya</taxon>
        <taxon>Ascomycota</taxon>
        <taxon>Pezizomycotina</taxon>
        <taxon>Eurotiomycetes</taxon>
        <taxon>Eurotiomycetidae</taxon>
        <taxon>Eurotiales</taxon>
        <taxon>Aspergillaceae</taxon>
        <taxon>Aspergillus</taxon>
        <taxon>Aspergillus subgen. Nidulantes</taxon>
    </lineage>
</organism>
<evidence type="ECO:0000250" key="1">
    <source>
        <dbReference type="UniProtKB" id="Q5B0D0"/>
    </source>
</evidence>
<evidence type="ECO:0000255" key="2"/>
<evidence type="ECO:0000255" key="3">
    <source>
        <dbReference type="PROSITE-ProRule" id="PRU00258"/>
    </source>
</evidence>
<evidence type="ECO:0000255" key="4">
    <source>
        <dbReference type="PROSITE-ProRule" id="PRU01348"/>
    </source>
</evidence>
<evidence type="ECO:0000255" key="5">
    <source>
        <dbReference type="PROSITE-ProRule" id="PRU01363"/>
    </source>
</evidence>
<evidence type="ECO:0000255" key="6">
    <source>
        <dbReference type="PROSITE-ProRule" id="PRU10022"/>
    </source>
</evidence>
<evidence type="ECO:0000269" key="7">
    <source>
    </source>
</evidence>
<evidence type="ECO:0000269" key="8">
    <source>
    </source>
</evidence>
<evidence type="ECO:0000269" key="9">
    <source>
    </source>
</evidence>
<evidence type="ECO:0000269" key="10">
    <source>
    </source>
</evidence>
<evidence type="ECO:0000269" key="11">
    <source>
    </source>
</evidence>
<evidence type="ECO:0000269" key="12">
    <source>
    </source>
</evidence>
<evidence type="ECO:0000303" key="13">
    <source>
    </source>
</evidence>
<evidence type="ECO:0000303" key="14">
    <source>
    </source>
</evidence>
<evidence type="ECO:0000305" key="15">
    <source>
    </source>
</evidence>
<evidence type="ECO:0000305" key="16">
    <source>
    </source>
</evidence>
<evidence type="ECO:0000305" key="17">
    <source>
    </source>
</evidence>
<proteinExistence type="evidence at protein level"/>
<accession>Q5ATJ7</accession>
<accession>C8VE81</accession>
<reference key="1">
    <citation type="journal article" date="2005" name="Nature">
        <title>Sequencing of Aspergillus nidulans and comparative analysis with A. fumigatus and A. oryzae.</title>
        <authorList>
            <person name="Galagan J.E."/>
            <person name="Calvo S.E."/>
            <person name="Cuomo C."/>
            <person name="Ma L.-J."/>
            <person name="Wortman J.R."/>
            <person name="Batzoglou S."/>
            <person name="Lee S.-I."/>
            <person name="Bastuerkmen M."/>
            <person name="Spevak C.C."/>
            <person name="Clutterbuck J."/>
            <person name="Kapitonov V."/>
            <person name="Jurka J."/>
            <person name="Scazzocchio C."/>
            <person name="Farman M.L."/>
            <person name="Butler J."/>
            <person name="Purcell S."/>
            <person name="Harris S."/>
            <person name="Braus G.H."/>
            <person name="Draht O."/>
            <person name="Busch S."/>
            <person name="D'Enfert C."/>
            <person name="Bouchier C."/>
            <person name="Goldman G.H."/>
            <person name="Bell-Pedersen D."/>
            <person name="Griffiths-Jones S."/>
            <person name="Doonan J.H."/>
            <person name="Yu J."/>
            <person name="Vienken K."/>
            <person name="Pain A."/>
            <person name="Freitag M."/>
            <person name="Selker E.U."/>
            <person name="Archer D.B."/>
            <person name="Penalva M.A."/>
            <person name="Oakley B.R."/>
            <person name="Momany M."/>
            <person name="Tanaka T."/>
            <person name="Kumagai T."/>
            <person name="Asai K."/>
            <person name="Machida M."/>
            <person name="Nierman W.C."/>
            <person name="Denning D.W."/>
            <person name="Caddick M.X."/>
            <person name="Hynes M."/>
            <person name="Paoletti M."/>
            <person name="Fischer R."/>
            <person name="Miller B.L."/>
            <person name="Dyer P.S."/>
            <person name="Sachs M.S."/>
            <person name="Osmani S.A."/>
            <person name="Birren B.W."/>
        </authorList>
    </citation>
    <scope>NUCLEOTIDE SEQUENCE [LARGE SCALE GENOMIC DNA]</scope>
    <source>
        <strain>FGSC A4 / ATCC 38163 / CBS 112.46 / NRRL 194 / M139</strain>
    </source>
</reference>
<reference key="2">
    <citation type="journal article" date="2009" name="Fungal Genet. Biol.">
        <title>The 2008 update of the Aspergillus nidulans genome annotation: a community effort.</title>
        <authorList>
            <person name="Wortman J.R."/>
            <person name="Gilsenan J.M."/>
            <person name="Joardar V."/>
            <person name="Deegan J."/>
            <person name="Clutterbuck J."/>
            <person name="Andersen M.R."/>
            <person name="Archer D."/>
            <person name="Bencina M."/>
            <person name="Braus G."/>
            <person name="Coutinho P."/>
            <person name="von Dohren H."/>
            <person name="Doonan J."/>
            <person name="Driessen A.J."/>
            <person name="Durek P."/>
            <person name="Espeso E."/>
            <person name="Fekete E."/>
            <person name="Flipphi M."/>
            <person name="Estrada C.G."/>
            <person name="Geysens S."/>
            <person name="Goldman G."/>
            <person name="de Groot P.W."/>
            <person name="Hansen K."/>
            <person name="Harris S.D."/>
            <person name="Heinekamp T."/>
            <person name="Helmstaedt K."/>
            <person name="Henrissat B."/>
            <person name="Hofmann G."/>
            <person name="Homan T."/>
            <person name="Horio T."/>
            <person name="Horiuchi H."/>
            <person name="James S."/>
            <person name="Jones M."/>
            <person name="Karaffa L."/>
            <person name="Karanyi Z."/>
            <person name="Kato M."/>
            <person name="Keller N."/>
            <person name="Kelly D.E."/>
            <person name="Kiel J.A."/>
            <person name="Kim J.M."/>
            <person name="van der Klei I.J."/>
            <person name="Klis F.M."/>
            <person name="Kovalchuk A."/>
            <person name="Krasevec N."/>
            <person name="Kubicek C.P."/>
            <person name="Liu B."/>
            <person name="Maccabe A."/>
            <person name="Meyer V."/>
            <person name="Mirabito P."/>
            <person name="Miskei M."/>
            <person name="Mos M."/>
            <person name="Mullins J."/>
            <person name="Nelson D.R."/>
            <person name="Nielsen J."/>
            <person name="Oakley B.R."/>
            <person name="Osmani S.A."/>
            <person name="Pakula T."/>
            <person name="Paszewski A."/>
            <person name="Paulsen I."/>
            <person name="Pilsyk S."/>
            <person name="Pocsi I."/>
            <person name="Punt P.J."/>
            <person name="Ram A.F."/>
            <person name="Ren Q."/>
            <person name="Robellet X."/>
            <person name="Robson G."/>
            <person name="Seiboth B."/>
            <person name="van Solingen P."/>
            <person name="Specht T."/>
            <person name="Sun J."/>
            <person name="Taheri-Talesh N."/>
            <person name="Takeshita N."/>
            <person name="Ussery D."/>
            <person name="vanKuyk P.A."/>
            <person name="Visser H."/>
            <person name="van de Vondervoort P.J."/>
            <person name="de Vries R.P."/>
            <person name="Walton J."/>
            <person name="Xiang X."/>
            <person name="Xiong Y."/>
            <person name="Zeng A.P."/>
            <person name="Brandt B.W."/>
            <person name="Cornell M.J."/>
            <person name="van den Hondel C.A."/>
            <person name="Visser J."/>
            <person name="Oliver S.G."/>
            <person name="Turner G."/>
        </authorList>
    </citation>
    <scope>GENOME REANNOTATION</scope>
    <source>
        <strain>FGSC A4 / ATCC 38163 / CBS 112.46 / NRRL 194 / M139</strain>
    </source>
</reference>
<reference key="3">
    <citation type="journal article" date="2011" name="FEMS Microbiol. Lett.">
        <title>A genome-wide polyketide synthase deletion library uncovers novel genetic links to polyketides and meroterpenoids in Aspergillus nidulans.</title>
        <authorList>
            <person name="Nielsen M.L."/>
            <person name="Nielsen J.B."/>
            <person name="Rank C."/>
            <person name="Klejnstrup M.L."/>
            <person name="Holm D.K."/>
            <person name="Brogaard K.H."/>
            <person name="Hansen B.G."/>
            <person name="Frisvad J.C."/>
            <person name="Larsen T.O."/>
            <person name="Mortensen U.H."/>
        </authorList>
    </citation>
    <scope>FUNCTION</scope>
    <scope>DISRUPTION PHENOTYPE</scope>
    <scope>MUTAGENESIS OF SER-1660</scope>
</reference>
<reference key="4">
    <citation type="journal article" date="2012" name="ACS Chem. Biol.">
        <title>Signaling the induction of sporulation involves the interaction of two secondary metabolites in Aspergillus nidulans.</title>
        <authorList>
            <person name="Rodriguez-Urra A.B."/>
            <person name="Jimenez C."/>
            <person name="Nieto M.I."/>
            <person name="Rodriguez J."/>
            <person name="Hayashi H."/>
            <person name="Ugalde U."/>
        </authorList>
    </citation>
    <scope>FUNCTION</scope>
</reference>
<reference key="5">
    <citation type="journal article" date="2012" name="J. Am. Chem. Soc.">
        <title>Two separate gene clusters encode the biosynthetic pathway for the meroterpenoids austinol and dehydroaustinol in Aspergillus nidulans.</title>
        <authorList>
            <person name="Lo H.C."/>
            <person name="Entwistle R."/>
            <person name="Guo C.J."/>
            <person name="Ahuja M."/>
            <person name="Szewczyk E."/>
            <person name="Hung J.H."/>
            <person name="Chiang Y.M."/>
            <person name="Oakley B.R."/>
            <person name="Wang C.C."/>
        </authorList>
    </citation>
    <scope>FUNCTION</scope>
    <scope>DISRUPTION PHENOTYPE</scope>
</reference>
<reference key="6">
    <citation type="journal article" date="2013" name="J. Am. Chem. Soc.">
        <title>Spiro-ring formation is catalyzed by a multifunctional dioxygenase in austinol biosynthesis.</title>
        <authorList>
            <person name="Matsuda Y."/>
            <person name="Awakawa T."/>
            <person name="Wakimoto T."/>
            <person name="Abe I."/>
        </authorList>
    </citation>
    <scope>FUNCTION</scope>
</reference>
<reference key="7">
    <citation type="journal article" date="2013" name="Org. Lett.">
        <title>Engineering fungal nonreducing polyketide synthase by heterologous expression and domain swapping.</title>
        <authorList>
            <person name="Yeh H.H."/>
            <person name="Chang S.L."/>
            <person name="Chiang Y.M."/>
            <person name="Bruno K.S."/>
            <person name="Oakley B.R."/>
            <person name="Wu T.K."/>
            <person name="Wang C.C."/>
        </authorList>
    </citation>
    <scope>DOMAIN</scope>
    <scope>MUTAGENESIS OF SER-2251; ASP-2413 AND HIS-2445</scope>
</reference>
<reference key="8">
    <citation type="journal article" date="2017" name="ACS Chem. Biol.">
        <title>Rewiring of the austinoid biosynthetic pathway in filamentous fungi.</title>
        <authorList>
            <person name="Mattern D.J."/>
            <person name="Valiante V."/>
            <person name="Horn F."/>
            <person name="Petzke L."/>
            <person name="Brakhage A.A."/>
        </authorList>
    </citation>
    <scope>FUNCTION</scope>
</reference>
<dbReference type="EC" id="2.3.1.-" evidence="15 16"/>
<dbReference type="EMBL" id="BN001305">
    <property type="protein sequence ID" value="CBF80428.1"/>
    <property type="molecule type" value="Genomic_DNA"/>
</dbReference>
<dbReference type="EMBL" id="AACD01000153">
    <property type="protein sequence ID" value="EAA67005.1"/>
    <property type="molecule type" value="Genomic_DNA"/>
</dbReference>
<dbReference type="RefSeq" id="XP_681652.1">
    <property type="nucleotide sequence ID" value="XM_676560.1"/>
</dbReference>
<dbReference type="SMR" id="Q5ATJ7"/>
<dbReference type="STRING" id="227321.Q5ATJ7"/>
<dbReference type="ESTHER" id="emeni-q5atj7">
    <property type="family name" value="BD-FAE"/>
</dbReference>
<dbReference type="EnsemblFungi" id="CBF80428">
    <property type="protein sequence ID" value="CBF80428"/>
    <property type="gene ID" value="ANIA_08383"/>
</dbReference>
<dbReference type="KEGG" id="ani:ANIA_08383"/>
<dbReference type="eggNOG" id="KOG1202">
    <property type="taxonomic scope" value="Eukaryota"/>
</dbReference>
<dbReference type="HOGENOM" id="CLU_000022_6_3_1"/>
<dbReference type="InParanoid" id="Q5ATJ7"/>
<dbReference type="OMA" id="KDNIGHT"/>
<dbReference type="OrthoDB" id="429813at2759"/>
<dbReference type="UniPathway" id="UPA00213"/>
<dbReference type="Proteomes" id="UP000000560">
    <property type="component" value="Chromosome V"/>
</dbReference>
<dbReference type="GO" id="GO:0004315">
    <property type="term" value="F:3-oxoacyl-[acyl-carrier-protein] synthase activity"/>
    <property type="evidence" value="ECO:0007669"/>
    <property type="project" value="InterPro"/>
</dbReference>
<dbReference type="GO" id="GO:0004312">
    <property type="term" value="F:fatty acid synthase activity"/>
    <property type="evidence" value="ECO:0000318"/>
    <property type="project" value="GO_Central"/>
</dbReference>
<dbReference type="GO" id="GO:0008168">
    <property type="term" value="F:methyltransferase activity"/>
    <property type="evidence" value="ECO:0007669"/>
    <property type="project" value="UniProtKB-KW"/>
</dbReference>
<dbReference type="GO" id="GO:0031177">
    <property type="term" value="F:phosphopantetheine binding"/>
    <property type="evidence" value="ECO:0007669"/>
    <property type="project" value="InterPro"/>
</dbReference>
<dbReference type="GO" id="GO:1900563">
    <property type="term" value="P:dehydroaustinol biosynthetic process"/>
    <property type="evidence" value="ECO:0000315"/>
    <property type="project" value="GO_Central"/>
</dbReference>
<dbReference type="GO" id="GO:0006633">
    <property type="term" value="P:fatty acid biosynthetic process"/>
    <property type="evidence" value="ECO:0000318"/>
    <property type="project" value="GO_Central"/>
</dbReference>
<dbReference type="GO" id="GO:0032259">
    <property type="term" value="P:methylation"/>
    <property type="evidence" value="ECO:0007669"/>
    <property type="project" value="UniProtKB-KW"/>
</dbReference>
<dbReference type="GO" id="GO:0044550">
    <property type="term" value="P:secondary metabolite biosynthetic process"/>
    <property type="evidence" value="ECO:0000318"/>
    <property type="project" value="GO_Central"/>
</dbReference>
<dbReference type="GO" id="GO:0016114">
    <property type="term" value="P:terpenoid biosynthetic process"/>
    <property type="evidence" value="ECO:0007669"/>
    <property type="project" value="UniProtKB-UniPathway"/>
</dbReference>
<dbReference type="CDD" id="cd02440">
    <property type="entry name" value="AdoMet_MTases"/>
    <property type="match status" value="1"/>
</dbReference>
<dbReference type="CDD" id="cd00833">
    <property type="entry name" value="PKS"/>
    <property type="match status" value="1"/>
</dbReference>
<dbReference type="Gene3D" id="3.30.70.3290">
    <property type="match status" value="1"/>
</dbReference>
<dbReference type="Gene3D" id="3.40.47.10">
    <property type="match status" value="1"/>
</dbReference>
<dbReference type="Gene3D" id="1.10.1200.10">
    <property type="entry name" value="ACP-like"/>
    <property type="match status" value="1"/>
</dbReference>
<dbReference type="Gene3D" id="3.40.50.1820">
    <property type="entry name" value="alpha/beta hydrolase"/>
    <property type="match status" value="1"/>
</dbReference>
<dbReference type="Gene3D" id="3.40.366.10">
    <property type="entry name" value="Malonyl-Coenzyme A Acyl Carrier Protein, domain 2"/>
    <property type="match status" value="2"/>
</dbReference>
<dbReference type="Gene3D" id="3.10.129.110">
    <property type="entry name" value="Polyketide synthase dehydratase"/>
    <property type="match status" value="1"/>
</dbReference>
<dbReference type="Gene3D" id="3.40.50.150">
    <property type="entry name" value="Vaccinia Virus protein VP39"/>
    <property type="match status" value="1"/>
</dbReference>
<dbReference type="InterPro" id="IPR029058">
    <property type="entry name" value="AB_hydrolase_fold"/>
</dbReference>
<dbReference type="InterPro" id="IPR001227">
    <property type="entry name" value="Ac_transferase_dom_sf"/>
</dbReference>
<dbReference type="InterPro" id="IPR036736">
    <property type="entry name" value="ACP-like_sf"/>
</dbReference>
<dbReference type="InterPro" id="IPR014043">
    <property type="entry name" value="Acyl_transferase_dom"/>
</dbReference>
<dbReference type="InterPro" id="IPR016035">
    <property type="entry name" value="Acyl_Trfase/lysoPLipase"/>
</dbReference>
<dbReference type="InterPro" id="IPR049492">
    <property type="entry name" value="BD-FAE-like_dom"/>
</dbReference>
<dbReference type="InterPro" id="IPR018201">
    <property type="entry name" value="Ketoacyl_synth_AS"/>
</dbReference>
<dbReference type="InterPro" id="IPR014031">
    <property type="entry name" value="Ketoacyl_synth_C"/>
</dbReference>
<dbReference type="InterPro" id="IPR014030">
    <property type="entry name" value="Ketoacyl_synth_N"/>
</dbReference>
<dbReference type="InterPro" id="IPR016036">
    <property type="entry name" value="Malonyl_transacylase_ACP-bd"/>
</dbReference>
<dbReference type="InterPro" id="IPR013217">
    <property type="entry name" value="Methyltransf_12"/>
</dbReference>
<dbReference type="InterPro" id="IPR020841">
    <property type="entry name" value="PKS_Beta-ketoAc_synthase_dom"/>
</dbReference>
<dbReference type="InterPro" id="IPR042104">
    <property type="entry name" value="PKS_dehydratase_sf"/>
</dbReference>
<dbReference type="InterPro" id="IPR020807">
    <property type="entry name" value="PKS_DH"/>
</dbReference>
<dbReference type="InterPro" id="IPR049552">
    <property type="entry name" value="PKS_DH_N"/>
</dbReference>
<dbReference type="InterPro" id="IPR049900">
    <property type="entry name" value="PKS_mFAS_DH"/>
</dbReference>
<dbReference type="InterPro" id="IPR050091">
    <property type="entry name" value="PKS_NRPS_Biosynth_Enz"/>
</dbReference>
<dbReference type="InterPro" id="IPR020806">
    <property type="entry name" value="PKS_PP-bd"/>
</dbReference>
<dbReference type="InterPro" id="IPR009081">
    <property type="entry name" value="PP-bd_ACP"/>
</dbReference>
<dbReference type="InterPro" id="IPR006162">
    <property type="entry name" value="Ppantetheine_attach_site"/>
</dbReference>
<dbReference type="InterPro" id="IPR029063">
    <property type="entry name" value="SAM-dependent_MTases_sf"/>
</dbReference>
<dbReference type="InterPro" id="IPR016039">
    <property type="entry name" value="Thiolase-like"/>
</dbReference>
<dbReference type="PANTHER" id="PTHR43775">
    <property type="entry name" value="FATTY ACID SYNTHASE"/>
    <property type="match status" value="1"/>
</dbReference>
<dbReference type="PANTHER" id="PTHR43775:SF21">
    <property type="entry name" value="NON-REDUCING POLYKETIDE SYNTHASE AUSA-RELATED"/>
    <property type="match status" value="1"/>
</dbReference>
<dbReference type="Pfam" id="PF00698">
    <property type="entry name" value="Acyl_transf_1"/>
    <property type="match status" value="1"/>
</dbReference>
<dbReference type="Pfam" id="PF20434">
    <property type="entry name" value="BD-FAE"/>
    <property type="match status" value="1"/>
</dbReference>
<dbReference type="Pfam" id="PF18558">
    <property type="entry name" value="HTH_51"/>
    <property type="match status" value="1"/>
</dbReference>
<dbReference type="Pfam" id="PF00109">
    <property type="entry name" value="ketoacyl-synt"/>
    <property type="match status" value="1"/>
</dbReference>
<dbReference type="Pfam" id="PF02801">
    <property type="entry name" value="Ketoacyl-synt_C"/>
    <property type="match status" value="1"/>
</dbReference>
<dbReference type="Pfam" id="PF08242">
    <property type="entry name" value="Methyltransf_12"/>
    <property type="match status" value="1"/>
</dbReference>
<dbReference type="Pfam" id="PF21089">
    <property type="entry name" value="PKS_DH_N"/>
    <property type="match status" value="1"/>
</dbReference>
<dbReference type="Pfam" id="PF00550">
    <property type="entry name" value="PP-binding"/>
    <property type="match status" value="1"/>
</dbReference>
<dbReference type="SMART" id="SM00827">
    <property type="entry name" value="PKS_AT"/>
    <property type="match status" value="1"/>
</dbReference>
<dbReference type="SMART" id="SM00826">
    <property type="entry name" value="PKS_DH"/>
    <property type="match status" value="1"/>
</dbReference>
<dbReference type="SMART" id="SM00825">
    <property type="entry name" value="PKS_KS"/>
    <property type="match status" value="1"/>
</dbReference>
<dbReference type="SMART" id="SM00823">
    <property type="entry name" value="PKS_PP"/>
    <property type="match status" value="1"/>
</dbReference>
<dbReference type="SMART" id="SM01294">
    <property type="entry name" value="PKS_PP_betabranch"/>
    <property type="match status" value="1"/>
</dbReference>
<dbReference type="SUPFAM" id="SSF47336">
    <property type="entry name" value="ACP-like"/>
    <property type="match status" value="1"/>
</dbReference>
<dbReference type="SUPFAM" id="SSF53474">
    <property type="entry name" value="alpha/beta-Hydrolases"/>
    <property type="match status" value="1"/>
</dbReference>
<dbReference type="SUPFAM" id="SSF52151">
    <property type="entry name" value="FabD/lysophospholipase-like"/>
    <property type="match status" value="1"/>
</dbReference>
<dbReference type="SUPFAM" id="SSF55048">
    <property type="entry name" value="Probable ACP-binding domain of malonyl-CoA ACP transacylase"/>
    <property type="match status" value="1"/>
</dbReference>
<dbReference type="SUPFAM" id="SSF53335">
    <property type="entry name" value="S-adenosyl-L-methionine-dependent methyltransferases"/>
    <property type="match status" value="1"/>
</dbReference>
<dbReference type="SUPFAM" id="SSF53901">
    <property type="entry name" value="Thiolase-like"/>
    <property type="match status" value="1"/>
</dbReference>
<dbReference type="PROSITE" id="PS50075">
    <property type="entry name" value="CARRIER"/>
    <property type="match status" value="1"/>
</dbReference>
<dbReference type="PROSITE" id="PS00606">
    <property type="entry name" value="KS3_1"/>
    <property type="match status" value="1"/>
</dbReference>
<dbReference type="PROSITE" id="PS52004">
    <property type="entry name" value="KS3_2"/>
    <property type="match status" value="1"/>
</dbReference>
<dbReference type="PROSITE" id="PS00012">
    <property type="entry name" value="PHOSPHOPANTETHEINE"/>
    <property type="match status" value="1"/>
</dbReference>
<dbReference type="PROSITE" id="PS52019">
    <property type="entry name" value="PKS_MFAS_DH"/>
    <property type="match status" value="1"/>
</dbReference>
<name>AUSA_EMENI</name>
<sequence>MGSLDDNTLQQVSVLFGPKYPEVELPAGHIRRYLSNQRNANWLHDAIRDLPSVWHDILRLWPAAEKLHGDARLRQLSAFLGGGTLRPDMAEPMNFLLVPATVLRHLVDFLELKEDKNYDVCDIQGFCVGFLAAIAAACWSDNEDEFGKVVSTVLRLAVYIGAAVDLDELCEQPARSIAVRWRTAQEHKLLTEVLTRYQGAYISCVTDENAVTVTVWDSQSVSFAKELEKHGLSVKTTTLRGRFHHSNHTQAVEDILQSCERNSRLCLPSKCHKRSLPRSNINGRVCEADSLFTVAVESILTTQANWKITVTATLDNMGQSDARSIIPIGAGQFVPRHARCRMLNIVEFNKGEHINGRRKMQSATALDVGVNVTAPETTAVPIAVTGMACRYPQADSVEELWRILDLGQCTVSPMPNSRLKSGSLQREPKGPFFGNYLARPDAFDHRFFGISAREAESMDPQQRVLLQVAYEAMESAGYCGLRRSKLPDDIGCYVGVGCDDYSENVGSRNATAFSATGTLQAFNSGRISHYFGWSGPSVTVDTACSSAAVAIHLACQAIRTNDCAIAVAGGVNIMTDPRWSQNLAGASFLSPTGASKAFDADANGYCRGEGAGLLVLRPLEAALRDGDPIHAVITGTSVNQGANCSPITVPDSNSQRSLYLKALSLSGLTPDVVGYVEAHGTGTQVGDPIEFESIRKTFSGPNRATKLYVGSIKDNIGHTETSSGVAGMLKTILMIQKRRIPKQANFRRLNPRITLNERNHIEIPTQSIDWEAEKRVAMVTNYGAAGSNAAIVLREPASTPATSNSAHRETLPSHVPFYVSARTEESLRSYCEALQSTIREVAQSGTNTVQHIAYNLARKQNRDMEHFVTFPAAAGEPSELMTRLGSIASAHTQVERRSQSFHPVIICFGGQTGDTASISRNLFESCELLRFHVDECENACNALDLPSLFPAIVSPFPNKDIVNLHCVLFSIQYATAKAWLDSGLQVTRMIGHSFGQLTALCVAGGLSLIDGMRLVATRAQLIQKHWGPHTGVMLSLRASKEKVQALLDAASGHADLACLNGPDNFVVAGDEESIRRIEIIATEKGMHVELKRLKNTHAFHSRLVDAILPGLSEVANTLTFRQLDIPVEACAEQEDDWLWVTGDKIVQHSRKPVFFHDAVERTLSRVDGPCVWLEAGTASPVINMVRRVVEASRPLKSHVYLPTDLSGAQAQANLAKVTCTLWSKAVPVQFWPFHPSETGYRWINLPPYQFAKTSHWIEYNPDAFRSPPQVPDQENVQEASLVRLLRQDGKEALFTINNKDNVFRMCTAGHAVANQNLCPASLYFELVVQAALLVSSTATKPTMYHIESLNICSPLVLGMPGAVLLQLTQQDESHGQWSFVLSTRDGLQDAVTHATGRVSLQAAGSNTGICARLSSLQRLLNLASWNSIATSPSSSGLKRSTVYQAFARAVNYADYYRGVEEVYAVGHEATGRVILPSSPTKCNPCDPILIDNFIQVAGIHVNCLSETHDDEVFVCSSVGDVLIGESFVRRDTAATVPWAVYSNYEPESKKKIVCDVFVLDHTTGALAVCMLSATFTGVSIQSLKRTLNRLSNHTARPTEAEQVSINVAAEATALSSTPVAHVSSSDGDLLAVQTMLGELLGISADELSAAAALGDIGVDSLMSTEVLTEINKRFGVAISNAELTQIPDVGGLVQRIFPGHSVVRIKTHSQGAVETEITITDREPKSISVDLAPVCDTSPTAFVDKASKLFATTRTSAEFSRKTRFAGFCDTVFPQQMELVTSYVVEAFHALGADLASLTPGQVVPPVKILPQHGKVMNQLVAVLEYSDLIERRESEIIRSQQPVGTVPSLILYKKILNKHAQHASEHKLLHTTGSRLAECLSGKADPLSLLFQNAEARALMTDVYSNAPMFKSATIQLAQYLKDLLFNLGTQREIKVLEIGAGTGGTTNYLVQELAAVPGLRFQYTFTDISSSLVTLARKRFKAYDFMRYTTLDIENDPSPELQGQYDIIISTNCIHATRNLITSCTNIRRLLRPEGILCLIELTRNLFWFDLVFGLLEGWWLFNDGRSHALAHERLWDHNLRQAGFNWVDWTDNDSAESDILRLIVASSTQPFYALEGDDECEADCNTVQEQTVLYNTRDGLELFADIYYPEKTDRSGAKRPIALLIHGGGHIMLSRKEIHHEQVRMLFDMGFLPVSIDYRLCPEVSLLDGPMQDACDALAWARNKLPQLQLQRRDILPDGNNVVAVGWSTGGHLAMTLAWTAPARGVSAPEAILSFYSPTDYTDPFWSKPNFPYRVDVSTSDIQTGNPLDALQDAPISGYNPPPSKRALGGWMAPSDPRSRIALYMNWTGQTLPVLFYGCNYRARAAESGQDYEVVLPEPILSEVQKVCPFSQISAGSYRAPTFLIHGTLDDLIPVQQAQRTHDKMQACGVDSDLRIVRDGLHLFDLEANFAGNQHAFQAVVDGYEFLRRHVGL</sequence>